<evidence type="ECO:0000255" key="1">
    <source>
        <dbReference type="HAMAP-Rule" id="MF_00043"/>
    </source>
</evidence>
<reference key="1">
    <citation type="journal article" date="2007" name="Genome Biol.">
        <title>Genome analysis and genome-wide proteomics of Thermococcus gammatolerans, the most radioresistant organism known amongst the Archaea.</title>
        <authorList>
            <person name="Zivanovic Y."/>
            <person name="Armengaud J."/>
            <person name="Lagorce A."/>
            <person name="Leplat C."/>
            <person name="Guerin P."/>
            <person name="Dutertre M."/>
            <person name="Anthouard V."/>
            <person name="Forterre P."/>
            <person name="Wincker P."/>
            <person name="Confalonieri F."/>
        </authorList>
    </citation>
    <scope>NUCLEOTIDE SEQUENCE [LARGE SCALE GENOMIC DNA]</scope>
    <source>
        <strain>DSM 15229 / JCM 11827 / EJ3</strain>
    </source>
</reference>
<protein>
    <recommendedName>
        <fullName evidence="1">Elongation factor 1-beta</fullName>
        <shortName evidence="1">EF-1-beta</shortName>
    </recommendedName>
    <alternativeName>
        <fullName evidence="1">aEF-1beta</fullName>
    </alternativeName>
</protein>
<name>EF1B_THEGJ</name>
<proteinExistence type="inferred from homology"/>
<sequence length="91" mass="10290">MSDYNMVAVVKVMPTDPEVNLDELEAKLKEVLPEKFGLAKVEREPIAFGLVALKFYVLAKDEEGYDLDQVLEAFRQVENVESAEVETVSRI</sequence>
<accession>C5A355</accession>
<gene>
    <name evidence="1" type="primary">ef1b</name>
    <name type="ordered locus">TGAM_0165</name>
</gene>
<feature type="chain" id="PRO_1000202148" description="Elongation factor 1-beta">
    <location>
        <begin position="1"/>
        <end position="91"/>
    </location>
</feature>
<keyword id="KW-0251">Elongation factor</keyword>
<keyword id="KW-0648">Protein biosynthesis</keyword>
<keyword id="KW-1185">Reference proteome</keyword>
<dbReference type="EMBL" id="CP001398">
    <property type="protein sequence ID" value="ACS32667.1"/>
    <property type="molecule type" value="Genomic_DNA"/>
</dbReference>
<dbReference type="RefSeq" id="WP_015857787.1">
    <property type="nucleotide sequence ID" value="NC_012804.1"/>
</dbReference>
<dbReference type="SMR" id="C5A355"/>
<dbReference type="STRING" id="593117.TGAM_0165"/>
<dbReference type="PaxDb" id="593117-TGAM_0165"/>
<dbReference type="GeneID" id="7988745"/>
<dbReference type="KEGG" id="tga:TGAM_0165"/>
<dbReference type="PATRIC" id="fig|593117.10.peg.167"/>
<dbReference type="eggNOG" id="arCOG01988">
    <property type="taxonomic scope" value="Archaea"/>
</dbReference>
<dbReference type="HOGENOM" id="CLU_165896_0_0_2"/>
<dbReference type="OrthoDB" id="84643at2157"/>
<dbReference type="Proteomes" id="UP000001488">
    <property type="component" value="Chromosome"/>
</dbReference>
<dbReference type="GO" id="GO:0003746">
    <property type="term" value="F:translation elongation factor activity"/>
    <property type="evidence" value="ECO:0007669"/>
    <property type="project" value="UniProtKB-UniRule"/>
</dbReference>
<dbReference type="CDD" id="cd00292">
    <property type="entry name" value="EF1B"/>
    <property type="match status" value="1"/>
</dbReference>
<dbReference type="Gene3D" id="3.30.70.60">
    <property type="match status" value="1"/>
</dbReference>
<dbReference type="HAMAP" id="MF_00043">
    <property type="entry name" value="EF1_beta"/>
    <property type="match status" value="1"/>
</dbReference>
<dbReference type="InterPro" id="IPR036219">
    <property type="entry name" value="eEF-1beta-like_sf"/>
</dbReference>
<dbReference type="InterPro" id="IPR014038">
    <property type="entry name" value="EF1B_bsu/dsu_GNE"/>
</dbReference>
<dbReference type="InterPro" id="IPR014717">
    <property type="entry name" value="Transl_elong_EF1B/ribsomal_bS6"/>
</dbReference>
<dbReference type="InterPro" id="IPR004542">
    <property type="entry name" value="Transl_elong_EF1B_B_arc"/>
</dbReference>
<dbReference type="NCBIfam" id="TIGR00489">
    <property type="entry name" value="aEF-1_beta"/>
    <property type="match status" value="1"/>
</dbReference>
<dbReference type="NCBIfam" id="NF001670">
    <property type="entry name" value="PRK00435.1"/>
    <property type="match status" value="1"/>
</dbReference>
<dbReference type="PANTHER" id="PTHR39647">
    <property type="entry name" value="ELONGATION FACTOR 1-BETA"/>
    <property type="match status" value="1"/>
</dbReference>
<dbReference type="PANTHER" id="PTHR39647:SF1">
    <property type="entry name" value="ELONGATION FACTOR 1-BETA"/>
    <property type="match status" value="1"/>
</dbReference>
<dbReference type="Pfam" id="PF00736">
    <property type="entry name" value="EF1_GNE"/>
    <property type="match status" value="1"/>
</dbReference>
<dbReference type="PIRSF" id="PIRSF006521">
    <property type="entry name" value="Transl_elong_EF1B_B_arc"/>
    <property type="match status" value="1"/>
</dbReference>
<dbReference type="SMART" id="SM00888">
    <property type="entry name" value="EF1_GNE"/>
    <property type="match status" value="1"/>
</dbReference>
<dbReference type="SUPFAM" id="SSF54984">
    <property type="entry name" value="eEF-1beta-like"/>
    <property type="match status" value="1"/>
</dbReference>
<organism>
    <name type="scientific">Thermococcus gammatolerans (strain DSM 15229 / JCM 11827 / EJ3)</name>
    <dbReference type="NCBI Taxonomy" id="593117"/>
    <lineage>
        <taxon>Archaea</taxon>
        <taxon>Methanobacteriati</taxon>
        <taxon>Methanobacteriota</taxon>
        <taxon>Thermococci</taxon>
        <taxon>Thermococcales</taxon>
        <taxon>Thermococcaceae</taxon>
        <taxon>Thermococcus</taxon>
    </lineage>
</organism>
<comment type="function">
    <text evidence="1">Promotes the exchange of GDP for GTP in EF-1-alpha/GDP, thus allowing the regeneration of EF-1-alpha/GTP that could then be used to form the ternary complex EF-1-alpha/GTP/AAtRNA.</text>
</comment>
<comment type="similarity">
    <text evidence="1">Belongs to the EF-1-beta/EF-1-delta family.</text>
</comment>